<comment type="catalytic activity">
    <reaction>
        <text>a 2-oxocarboxylate + H(+) = an aldehyde + CO2</text>
        <dbReference type="Rhea" id="RHEA:11628"/>
        <dbReference type="ChEBI" id="CHEBI:15378"/>
        <dbReference type="ChEBI" id="CHEBI:16526"/>
        <dbReference type="ChEBI" id="CHEBI:17478"/>
        <dbReference type="ChEBI" id="CHEBI:35179"/>
        <dbReference type="EC" id="4.1.1.1"/>
    </reaction>
</comment>
<comment type="cofactor">
    <cofactor>
        <name>a metal cation</name>
        <dbReference type="ChEBI" id="CHEBI:25213"/>
    </cofactor>
    <text>Binds 1 metal ion per subunit.</text>
</comment>
<comment type="cofactor">
    <cofactor>
        <name>thiamine diphosphate</name>
        <dbReference type="ChEBI" id="CHEBI:58937"/>
    </cofactor>
    <text>Binds 1 thiamine pyrophosphate per subunit.</text>
</comment>
<comment type="subunit">
    <text evidence="3">Homotetramer.</text>
</comment>
<comment type="similarity">
    <text evidence="3">Belongs to the TPP enzyme family.</text>
</comment>
<name>PDC1_PEA</name>
<organism>
    <name type="scientific">Pisum sativum</name>
    <name type="common">Garden pea</name>
    <name type="synonym">Lathyrus oleraceus</name>
    <dbReference type="NCBI Taxonomy" id="3888"/>
    <lineage>
        <taxon>Eukaryota</taxon>
        <taxon>Viridiplantae</taxon>
        <taxon>Streptophyta</taxon>
        <taxon>Embryophyta</taxon>
        <taxon>Tracheophyta</taxon>
        <taxon>Spermatophyta</taxon>
        <taxon>Magnoliopsida</taxon>
        <taxon>eudicotyledons</taxon>
        <taxon>Gunneridae</taxon>
        <taxon>Pentapetalae</taxon>
        <taxon>rosids</taxon>
        <taxon>fabids</taxon>
        <taxon>Fabales</taxon>
        <taxon>Fabaceae</taxon>
        <taxon>Papilionoideae</taxon>
        <taxon>50 kb inversion clade</taxon>
        <taxon>NPAAA clade</taxon>
        <taxon>Hologalegina</taxon>
        <taxon>IRL clade</taxon>
        <taxon>Fabeae</taxon>
        <taxon>Pisum</taxon>
    </lineage>
</organism>
<sequence length="593" mass="63967">METETETPNGSTPCPTSAPSAIPLRPSSCDGTMGRHLARRLVEIGVRDVFSVPGDFNLTLLDHLIAEPELNLVGCCNELNAGYAADGYGRAKGVGACVVTFTVGGLSILNAIAGAYSENLPVICIVGGPNSNDYGTNRILHHTIGLPDFSQELQCFQTITCFQAVVNNLDDAHELIDTAISTALKESKPVYISIGCNLPAIPHPTFARDPVPFFLAPRVSNQAGLEAAVEEAAAFLNKAVKPVIVGGPKLRVAKAQKAFMEFAEASGYPIAVMPSGKGLVPENHPHFIGTYWGAVSTSYCGEIVESADAYVFVGPIFNDYSSVGYSLLIKKEKSLIVQPNRVTIGNGLSLGWVFMADFLTALAKKVKTNTTAVENYRRIYVPPGIPLKREKDEPLRVNVLFKHIQALISGDTAVIAETGDSWFNCQKLRLPENCGYEFQMQYGSIGWSVGATLGYAQAATDKRVIACIGDGSFQVTAQDISTMIRCGQRSIIFLINNGGYTIEVEIHDGPYNVIKNWDYTGFVSAIHNGQGKCWTAKVRTEEDLTEAIATATGAEKDSLCFIEVFAHKDDTSKELLEWGSRVAAANSRPPNPQ</sequence>
<evidence type="ECO:0000250" key="1"/>
<evidence type="ECO:0000256" key="2">
    <source>
        <dbReference type="SAM" id="MobiDB-lite"/>
    </source>
</evidence>
<evidence type="ECO:0000305" key="3"/>
<proteinExistence type="evidence at transcript level"/>
<dbReference type="EC" id="4.1.1.1"/>
<dbReference type="EMBL" id="Z66543">
    <property type="protein sequence ID" value="CAA91444.1"/>
    <property type="molecule type" value="mRNA"/>
</dbReference>
<dbReference type="PIR" id="S65470">
    <property type="entry name" value="S65470"/>
</dbReference>
<dbReference type="SMR" id="P51850"/>
<dbReference type="BioCyc" id="MetaCyc:MONOMER-15104"/>
<dbReference type="GO" id="GO:0005829">
    <property type="term" value="C:cytosol"/>
    <property type="evidence" value="ECO:0007669"/>
    <property type="project" value="TreeGrafter"/>
</dbReference>
<dbReference type="GO" id="GO:0000287">
    <property type="term" value="F:magnesium ion binding"/>
    <property type="evidence" value="ECO:0007669"/>
    <property type="project" value="InterPro"/>
</dbReference>
<dbReference type="GO" id="GO:0004737">
    <property type="term" value="F:pyruvate decarboxylase activity"/>
    <property type="evidence" value="ECO:0007669"/>
    <property type="project" value="UniProtKB-EC"/>
</dbReference>
<dbReference type="GO" id="GO:0030976">
    <property type="term" value="F:thiamine pyrophosphate binding"/>
    <property type="evidence" value="ECO:0007669"/>
    <property type="project" value="InterPro"/>
</dbReference>
<dbReference type="GO" id="GO:0000949">
    <property type="term" value="P:aromatic amino acid family catabolic process to alcohol via Ehrlich pathway"/>
    <property type="evidence" value="ECO:0007669"/>
    <property type="project" value="TreeGrafter"/>
</dbReference>
<dbReference type="CDD" id="cd02005">
    <property type="entry name" value="TPP_PDC_IPDC"/>
    <property type="match status" value="1"/>
</dbReference>
<dbReference type="CDD" id="cd07038">
    <property type="entry name" value="TPP_PYR_PDC_IPDC_like"/>
    <property type="match status" value="1"/>
</dbReference>
<dbReference type="FunFam" id="3.40.50.1220:FF:000009">
    <property type="entry name" value="Pyruvate decarboxylase 1"/>
    <property type="match status" value="1"/>
</dbReference>
<dbReference type="FunFam" id="3.40.50.970:FF:000021">
    <property type="entry name" value="Pyruvate decarboxylase 1"/>
    <property type="match status" value="1"/>
</dbReference>
<dbReference type="FunFam" id="3.40.50.970:FF:000017">
    <property type="entry name" value="pyruvate decarboxylase 1"/>
    <property type="match status" value="1"/>
</dbReference>
<dbReference type="Gene3D" id="3.40.50.970">
    <property type="match status" value="2"/>
</dbReference>
<dbReference type="Gene3D" id="3.40.50.1220">
    <property type="entry name" value="TPP-binding domain"/>
    <property type="match status" value="1"/>
</dbReference>
<dbReference type="InterPro" id="IPR029035">
    <property type="entry name" value="DHS-like_NAD/FAD-binding_dom"/>
</dbReference>
<dbReference type="InterPro" id="IPR012110">
    <property type="entry name" value="PDC/IPDC-like"/>
</dbReference>
<dbReference type="InterPro" id="IPR029061">
    <property type="entry name" value="THDP-binding"/>
</dbReference>
<dbReference type="InterPro" id="IPR012000">
    <property type="entry name" value="Thiamin_PyroP_enz_cen_dom"/>
</dbReference>
<dbReference type="InterPro" id="IPR012001">
    <property type="entry name" value="Thiamin_PyroP_enz_TPP-bd_dom"/>
</dbReference>
<dbReference type="InterPro" id="IPR011766">
    <property type="entry name" value="TPP_enzyme_TPP-bd"/>
</dbReference>
<dbReference type="InterPro" id="IPR047214">
    <property type="entry name" value="TPP_PDC_IPDC"/>
</dbReference>
<dbReference type="InterPro" id="IPR047213">
    <property type="entry name" value="TPP_PYR_PDC_IPDC-like"/>
</dbReference>
<dbReference type="PANTHER" id="PTHR43452">
    <property type="entry name" value="PYRUVATE DECARBOXYLASE"/>
    <property type="match status" value="1"/>
</dbReference>
<dbReference type="PANTHER" id="PTHR43452:SF1">
    <property type="entry name" value="PYRUVATE DECARBOXYLASE C186.09-RELATED"/>
    <property type="match status" value="1"/>
</dbReference>
<dbReference type="Pfam" id="PF02775">
    <property type="entry name" value="TPP_enzyme_C"/>
    <property type="match status" value="1"/>
</dbReference>
<dbReference type="Pfam" id="PF00205">
    <property type="entry name" value="TPP_enzyme_M"/>
    <property type="match status" value="1"/>
</dbReference>
<dbReference type="Pfam" id="PF02776">
    <property type="entry name" value="TPP_enzyme_N"/>
    <property type="match status" value="1"/>
</dbReference>
<dbReference type="PIRSF" id="PIRSF036565">
    <property type="entry name" value="Pyruvt_ip_decrb"/>
    <property type="match status" value="1"/>
</dbReference>
<dbReference type="SUPFAM" id="SSF52467">
    <property type="entry name" value="DHS-like NAD/FAD-binding domain"/>
    <property type="match status" value="1"/>
</dbReference>
<dbReference type="SUPFAM" id="SSF52518">
    <property type="entry name" value="Thiamin diphosphate-binding fold (THDP-binding)"/>
    <property type="match status" value="2"/>
</dbReference>
<feature type="chain" id="PRO_0000090782" description="Pyruvate decarboxylase 1">
    <location>
        <begin position="1"/>
        <end position="593"/>
    </location>
</feature>
<feature type="region of interest" description="Disordered" evidence="2">
    <location>
        <begin position="1"/>
        <end position="20"/>
    </location>
</feature>
<feature type="region of interest" description="Thiamine pyrophosphate binding">
    <location>
        <begin position="420"/>
        <end position="502"/>
    </location>
</feature>
<feature type="compositionally biased region" description="Polar residues" evidence="2">
    <location>
        <begin position="1"/>
        <end position="19"/>
    </location>
</feature>
<feature type="binding site" evidence="1">
    <location>
        <position position="55"/>
    </location>
    <ligand>
        <name>substrate</name>
    </ligand>
</feature>
<feature type="binding site" evidence="1">
    <location>
        <position position="142"/>
    </location>
    <ligand>
        <name>substrate</name>
    </ligand>
</feature>
<feature type="binding site" evidence="1">
    <location>
        <position position="470"/>
    </location>
    <ligand>
        <name>Mg(2+)</name>
        <dbReference type="ChEBI" id="CHEBI:18420"/>
    </ligand>
</feature>
<feature type="binding site" evidence="1">
    <location>
        <position position="497"/>
    </location>
    <ligand>
        <name>Mg(2+)</name>
        <dbReference type="ChEBI" id="CHEBI:18420"/>
    </ligand>
</feature>
<feature type="binding site" evidence="1">
    <location>
        <position position="499"/>
    </location>
    <ligand>
        <name>Mg(2+)</name>
        <dbReference type="ChEBI" id="CHEBI:18420"/>
    </ligand>
</feature>
<feature type="binding site" evidence="1">
    <location>
        <position position="503"/>
    </location>
    <ligand>
        <name>substrate</name>
    </ligand>
</feature>
<accession>P51850</accession>
<keyword id="KW-0210">Decarboxylase</keyword>
<keyword id="KW-0456">Lyase</keyword>
<keyword id="KW-0460">Magnesium</keyword>
<keyword id="KW-0479">Metal-binding</keyword>
<keyword id="KW-0786">Thiamine pyrophosphate</keyword>
<protein>
    <recommendedName>
        <fullName>Pyruvate decarboxylase 1</fullName>
        <shortName>PDC</shortName>
        <ecNumber>4.1.1.1</ecNumber>
    </recommendedName>
</protein>
<reference key="1">
    <citation type="journal article" date="1996" name="Eur. J. Biochem.">
        <title>Pyruvate decarboxylase from Pisum sativum. Properties, nucleotide and amino acid sequences.</title>
        <authorList>
            <person name="Muecke U."/>
            <person name="Wohlfarth T."/>
            <person name="Fiedler U."/>
            <person name="Baeumlein H."/>
            <person name="Ruecknagel K.P."/>
            <person name="Koenig S."/>
        </authorList>
    </citation>
    <scope>NUCLEOTIDE SEQUENCE [MRNA]</scope>
    <source>
        <strain>cv. Miko</strain>
    </source>
</reference>
<gene>
    <name type="primary">PDC1</name>
</gene>